<evidence type="ECO:0000255" key="1">
    <source>
        <dbReference type="HAMAP-Rule" id="MF_01390"/>
    </source>
</evidence>
<protein>
    <recommendedName>
        <fullName evidence="1">Maturase K</fullName>
    </recommendedName>
    <alternativeName>
        <fullName evidence="1">Intron maturase</fullName>
    </alternativeName>
</protein>
<dbReference type="EMBL" id="AY321168">
    <property type="protein sequence ID" value="AAQ84250.1"/>
    <property type="molecule type" value="Genomic_DNA"/>
</dbReference>
<dbReference type="GO" id="GO:0009507">
    <property type="term" value="C:chloroplast"/>
    <property type="evidence" value="ECO:0007669"/>
    <property type="project" value="UniProtKB-SubCell"/>
</dbReference>
<dbReference type="GO" id="GO:0003723">
    <property type="term" value="F:RNA binding"/>
    <property type="evidence" value="ECO:0007669"/>
    <property type="project" value="UniProtKB-KW"/>
</dbReference>
<dbReference type="GO" id="GO:0006397">
    <property type="term" value="P:mRNA processing"/>
    <property type="evidence" value="ECO:0007669"/>
    <property type="project" value="UniProtKB-KW"/>
</dbReference>
<dbReference type="GO" id="GO:0008380">
    <property type="term" value="P:RNA splicing"/>
    <property type="evidence" value="ECO:0007669"/>
    <property type="project" value="UniProtKB-UniRule"/>
</dbReference>
<dbReference type="GO" id="GO:0008033">
    <property type="term" value="P:tRNA processing"/>
    <property type="evidence" value="ECO:0007669"/>
    <property type="project" value="UniProtKB-KW"/>
</dbReference>
<dbReference type="HAMAP" id="MF_01390">
    <property type="entry name" value="MatK"/>
    <property type="match status" value="1"/>
</dbReference>
<dbReference type="InterPro" id="IPR024937">
    <property type="entry name" value="Domain_X"/>
</dbReference>
<dbReference type="InterPro" id="IPR002866">
    <property type="entry name" value="Maturase_MatK"/>
</dbReference>
<dbReference type="InterPro" id="IPR024942">
    <property type="entry name" value="Maturase_MatK_N"/>
</dbReference>
<dbReference type="PANTHER" id="PTHR34811">
    <property type="entry name" value="MATURASE K"/>
    <property type="match status" value="1"/>
</dbReference>
<dbReference type="PANTHER" id="PTHR34811:SF1">
    <property type="entry name" value="MATURASE K"/>
    <property type="match status" value="1"/>
</dbReference>
<dbReference type="Pfam" id="PF01348">
    <property type="entry name" value="Intron_maturas2"/>
    <property type="match status" value="1"/>
</dbReference>
<dbReference type="Pfam" id="PF01824">
    <property type="entry name" value="MatK_N"/>
    <property type="match status" value="1"/>
</dbReference>
<name>MATK_ADADI</name>
<gene>
    <name evidence="1" type="primary">matK</name>
</gene>
<organism>
    <name type="scientific">Adansonia digitata</name>
    <name type="common">Baobab tree</name>
    <name type="synonym">Dead-rat tree</name>
    <dbReference type="NCBI Taxonomy" id="69109"/>
    <lineage>
        <taxon>Eukaryota</taxon>
        <taxon>Viridiplantae</taxon>
        <taxon>Streptophyta</taxon>
        <taxon>Embryophyta</taxon>
        <taxon>Tracheophyta</taxon>
        <taxon>Spermatophyta</taxon>
        <taxon>Magnoliopsida</taxon>
        <taxon>eudicotyledons</taxon>
        <taxon>Gunneridae</taxon>
        <taxon>Pentapetalae</taxon>
        <taxon>rosids</taxon>
        <taxon>malvids</taxon>
        <taxon>Malvales</taxon>
        <taxon>Malvaceae</taxon>
        <taxon>Bombacoideae</taxon>
        <taxon>Adansonia</taxon>
    </lineage>
</organism>
<feature type="chain" id="PRO_0000143210" description="Maturase K">
    <location>
        <begin position="1"/>
        <end position="504"/>
    </location>
</feature>
<sequence length="504" mass="59831">MEEFQVYLELNRSRRHDFLYPLIFREYIYALAHDHGLNKSMIFLENQGYVNKFSSLIVKRLIIRMDQQNHLIISANDSNQNPFFGHNNNLYSQMISAGFAVIVEIPFSLRLVSYSQGEEVAKSHNLQSIHSIFPFLEDKFSHLNYVLDVLIPHPIHLEILVQALRYWVKDASSLHLLRFSLYEYCNLKSFITPKKSISIFNPRLFFFLYNSHACEYESIFLFLRNQSSHLRSTSSGVFLERIYFYGKIEYLLEVFYNDFQNNLWLFKDPFIHFIRYQGKAILASKDTSLLMNKWKYYFVDLWQYHFYMWSQSGRVRINQLSKYSLDFLGYLSSVRLNPSVVRSQMLENSFIIDNAMKKLDTRIPIISLIGSLSKAKFCNTLGHPISKPTWADSSDSDIIDRFVRICRNLSHYHSGSSKKKSLYRIKYILRFSCVKTLARKHKNTVRAFLKRLGSEFLEEFFTETEEEHVFSLIFPRVFFTSRKLYRGRIWYLDIICINALVNHE</sequence>
<geneLocation type="chloroplast"/>
<reference key="1">
    <citation type="submission" date="2003-06" db="EMBL/GenBank/DDBJ databases">
        <title>Phylogenetic analysis of Malvaceae sensu lato based on chloroplast and nuclear DNA sequences.</title>
        <authorList>
            <person name="Nyffeler R."/>
            <person name="Yen A."/>
            <person name="Alverson W.S."/>
            <person name="Bayer C."/>
            <person name="Blattner F."/>
            <person name="Whitlock B."/>
            <person name="Chase M.W."/>
            <person name="Baum D.A."/>
        </authorList>
    </citation>
    <scope>NUCLEOTIDE SEQUENCE [GENOMIC DNA]</scope>
</reference>
<keyword id="KW-0150">Chloroplast</keyword>
<keyword id="KW-0507">mRNA processing</keyword>
<keyword id="KW-0934">Plastid</keyword>
<keyword id="KW-0694">RNA-binding</keyword>
<keyword id="KW-0819">tRNA processing</keyword>
<comment type="function">
    <text evidence="1">Usually encoded in the trnK tRNA gene intron. Probably assists in splicing its own and other chloroplast group II introns.</text>
</comment>
<comment type="subcellular location">
    <subcellularLocation>
        <location>Plastid</location>
        <location>Chloroplast</location>
    </subcellularLocation>
</comment>
<comment type="similarity">
    <text evidence="1">Belongs to the intron maturase 2 family. MatK subfamily.</text>
</comment>
<proteinExistence type="inferred from homology"/>
<accession>Q6EIJ6</accession>